<feature type="chain" id="PRO_0000102126" description="Replication restart protein PriA">
    <location>
        <begin position="1"/>
        <end position="619"/>
    </location>
</feature>
<feature type="domain" description="Helicase ATP-binding" evidence="1">
    <location>
        <begin position="119"/>
        <end position="285"/>
    </location>
</feature>
<feature type="domain" description="Helicase C-terminal" evidence="1">
    <location>
        <begin position="371"/>
        <end position="532"/>
    </location>
</feature>
<feature type="short sequence motif" description="DEAH box" evidence="1">
    <location>
        <begin position="228"/>
        <end position="231"/>
    </location>
</feature>
<feature type="binding site" evidence="1">
    <location>
        <begin position="132"/>
        <end position="139"/>
    </location>
    <ligand>
        <name>ATP</name>
        <dbReference type="ChEBI" id="CHEBI:30616"/>
    </ligand>
</feature>
<feature type="binding site" evidence="1">
    <location>
        <position position="336"/>
    </location>
    <ligand>
        <name>Zn(2+)</name>
        <dbReference type="ChEBI" id="CHEBI:29105"/>
        <label>1</label>
    </ligand>
</feature>
<feature type="binding site" evidence="1">
    <location>
        <position position="339"/>
    </location>
    <ligand>
        <name>Zn(2+)</name>
        <dbReference type="ChEBI" id="CHEBI:29105"/>
        <label>1</label>
    </ligand>
</feature>
<feature type="binding site" evidence="1">
    <location>
        <position position="345"/>
    </location>
    <ligand>
        <name>Zn(2+)</name>
        <dbReference type="ChEBI" id="CHEBI:29105"/>
        <label>2</label>
    </ligand>
</feature>
<feature type="binding site" evidence="1">
    <location>
        <position position="348"/>
    </location>
    <ligand>
        <name>Zn(2+)</name>
        <dbReference type="ChEBI" id="CHEBI:29105"/>
        <label>2</label>
    </ligand>
</feature>
<feature type="binding site" evidence="1">
    <location>
        <position position="363"/>
    </location>
    <ligand>
        <name>Zn(2+)</name>
        <dbReference type="ChEBI" id="CHEBI:29105"/>
        <label>2</label>
    </ligand>
</feature>
<feature type="binding site" evidence="1">
    <location>
        <position position="366"/>
    </location>
    <ligand>
        <name>Zn(2+)</name>
        <dbReference type="ChEBI" id="CHEBI:29105"/>
        <label>2</label>
    </ligand>
</feature>
<feature type="binding site" evidence="1">
    <location>
        <position position="376"/>
    </location>
    <ligand>
        <name>Zn(2+)</name>
        <dbReference type="ChEBI" id="CHEBI:29105"/>
        <label>1</label>
    </ligand>
</feature>
<feature type="binding site" evidence="1">
    <location>
        <position position="379"/>
    </location>
    <ligand>
        <name>Zn(2+)</name>
        <dbReference type="ChEBI" id="CHEBI:29105"/>
        <label>1</label>
    </ligand>
</feature>
<evidence type="ECO:0000255" key="1">
    <source>
        <dbReference type="HAMAP-Rule" id="MF_00983"/>
    </source>
</evidence>
<protein>
    <recommendedName>
        <fullName evidence="1">Replication restart protein PriA</fullName>
    </recommendedName>
    <alternativeName>
        <fullName evidence="1">ATP-dependent DNA helicase PriA</fullName>
        <ecNumber evidence="1">5.6.2.4</ecNumber>
    </alternativeName>
    <alternativeName>
        <fullName evidence="1">DNA 3'-5' helicase PriA</fullName>
    </alternativeName>
</protein>
<reference key="1">
    <citation type="journal article" date="1999" name="Nature">
        <title>Genomic sequence comparison of two unrelated isolates of the human gastric pathogen Helicobacter pylori.</title>
        <authorList>
            <person name="Alm R.A."/>
            <person name="Ling L.-S.L."/>
            <person name="Moir D.T."/>
            <person name="King B.L."/>
            <person name="Brown E.D."/>
            <person name="Doig P.C."/>
            <person name="Smith D.R."/>
            <person name="Noonan B."/>
            <person name="Guild B.C."/>
            <person name="deJonge B.L."/>
            <person name="Carmel G."/>
            <person name="Tummino P.J."/>
            <person name="Caruso A."/>
            <person name="Uria-Nickelsen M."/>
            <person name="Mills D.M."/>
            <person name="Ives C."/>
            <person name="Gibson R."/>
            <person name="Merberg D."/>
            <person name="Mills S.D."/>
            <person name="Jiang Q."/>
            <person name="Taylor D.E."/>
            <person name="Vovis G.F."/>
            <person name="Trust T.J."/>
        </authorList>
    </citation>
    <scope>NUCLEOTIDE SEQUENCE [LARGE SCALE GENOMIC DNA]</scope>
    <source>
        <strain>J99 / ATCC 700824</strain>
    </source>
</reference>
<proteinExistence type="inferred from homology"/>
<organism>
    <name type="scientific">Helicobacter pylori (strain J99 / ATCC 700824)</name>
    <name type="common">Campylobacter pylori J99</name>
    <dbReference type="NCBI Taxonomy" id="85963"/>
    <lineage>
        <taxon>Bacteria</taxon>
        <taxon>Pseudomonadati</taxon>
        <taxon>Campylobacterota</taxon>
        <taxon>Epsilonproteobacteria</taxon>
        <taxon>Campylobacterales</taxon>
        <taxon>Helicobacteraceae</taxon>
        <taxon>Helicobacter</taxon>
    </lineage>
</organism>
<keyword id="KW-0067">ATP-binding</keyword>
<keyword id="KW-0235">DNA replication</keyword>
<keyword id="KW-0238">DNA-binding</keyword>
<keyword id="KW-0347">Helicase</keyword>
<keyword id="KW-0378">Hydrolase</keyword>
<keyword id="KW-0413">Isomerase</keyword>
<keyword id="KW-0479">Metal-binding</keyword>
<keyword id="KW-0547">Nucleotide-binding</keyword>
<keyword id="KW-0639">Primosome</keyword>
<keyword id="KW-0862">Zinc</keyword>
<comment type="function">
    <text evidence="1">Initiates the restart of stalled replication forks, which reloads the replicative helicase on sites other than the origin of replication. Recognizes and binds to abandoned replication forks and remodels them to uncover a helicase loading site. Promotes assembly of the primosome at these replication forks.</text>
</comment>
<comment type="catalytic activity">
    <reaction evidence="1">
        <text>Couples ATP hydrolysis with the unwinding of duplex DNA by translocating in the 3'-5' direction.</text>
        <dbReference type="EC" id="5.6.2.4"/>
    </reaction>
</comment>
<comment type="catalytic activity">
    <reaction evidence="1">
        <text>ATP + H2O = ADP + phosphate + H(+)</text>
        <dbReference type="Rhea" id="RHEA:13065"/>
        <dbReference type="ChEBI" id="CHEBI:15377"/>
        <dbReference type="ChEBI" id="CHEBI:15378"/>
        <dbReference type="ChEBI" id="CHEBI:30616"/>
        <dbReference type="ChEBI" id="CHEBI:43474"/>
        <dbReference type="ChEBI" id="CHEBI:456216"/>
        <dbReference type="EC" id="5.6.2.4"/>
    </reaction>
</comment>
<comment type="cofactor">
    <cofactor evidence="1">
        <name>Zn(2+)</name>
        <dbReference type="ChEBI" id="CHEBI:29105"/>
    </cofactor>
    <text evidence="1">Binds 2 zinc ions per subunit.</text>
</comment>
<comment type="subunit">
    <text evidence="1">Component of the replication restart primosome.</text>
</comment>
<comment type="similarity">
    <text evidence="1">Belongs to the helicase family. PriA subfamily.</text>
</comment>
<accession>Q9ZKE4</accession>
<dbReference type="EC" id="5.6.2.4" evidence="1"/>
<dbReference type="EMBL" id="AE001439">
    <property type="protein sequence ID" value="AAD06569.1"/>
    <property type="molecule type" value="Genomic_DNA"/>
</dbReference>
<dbReference type="PIR" id="G71861">
    <property type="entry name" value="G71861"/>
</dbReference>
<dbReference type="RefSeq" id="WP_000499292.1">
    <property type="nucleotide sequence ID" value="NC_000921.1"/>
</dbReference>
<dbReference type="SMR" id="Q9ZKE4"/>
<dbReference type="TCDB" id="3.A.11.3.1">
    <property type="family name" value="the bacterial competence-related dna transformation transporter (dna-t) family"/>
</dbReference>
<dbReference type="KEGG" id="hpj:jhp_0994"/>
<dbReference type="PATRIC" id="fig|85963.30.peg.1597"/>
<dbReference type="eggNOG" id="COG1198">
    <property type="taxonomic scope" value="Bacteria"/>
</dbReference>
<dbReference type="Proteomes" id="UP000000804">
    <property type="component" value="Chromosome"/>
</dbReference>
<dbReference type="GO" id="GO:1990077">
    <property type="term" value="C:primosome complex"/>
    <property type="evidence" value="ECO:0007669"/>
    <property type="project" value="UniProtKB-UniRule"/>
</dbReference>
<dbReference type="GO" id="GO:0043138">
    <property type="term" value="F:3'-5' DNA helicase activity"/>
    <property type="evidence" value="ECO:0007669"/>
    <property type="project" value="TreeGrafter"/>
</dbReference>
<dbReference type="GO" id="GO:0005524">
    <property type="term" value="F:ATP binding"/>
    <property type="evidence" value="ECO:0007669"/>
    <property type="project" value="UniProtKB-UniRule"/>
</dbReference>
<dbReference type="GO" id="GO:0016887">
    <property type="term" value="F:ATP hydrolysis activity"/>
    <property type="evidence" value="ECO:0007669"/>
    <property type="project" value="RHEA"/>
</dbReference>
<dbReference type="GO" id="GO:0003677">
    <property type="term" value="F:DNA binding"/>
    <property type="evidence" value="ECO:0007669"/>
    <property type="project" value="UniProtKB-UniRule"/>
</dbReference>
<dbReference type="GO" id="GO:0008270">
    <property type="term" value="F:zinc ion binding"/>
    <property type="evidence" value="ECO:0007669"/>
    <property type="project" value="UniProtKB-UniRule"/>
</dbReference>
<dbReference type="GO" id="GO:0006310">
    <property type="term" value="P:DNA recombination"/>
    <property type="evidence" value="ECO:0007669"/>
    <property type="project" value="InterPro"/>
</dbReference>
<dbReference type="GO" id="GO:0006270">
    <property type="term" value="P:DNA replication initiation"/>
    <property type="evidence" value="ECO:0007669"/>
    <property type="project" value="TreeGrafter"/>
</dbReference>
<dbReference type="GO" id="GO:0006269">
    <property type="term" value="P:DNA replication, synthesis of primer"/>
    <property type="evidence" value="ECO:0007669"/>
    <property type="project" value="UniProtKB-KW"/>
</dbReference>
<dbReference type="GO" id="GO:0006302">
    <property type="term" value="P:double-strand break repair"/>
    <property type="evidence" value="ECO:0007669"/>
    <property type="project" value="InterPro"/>
</dbReference>
<dbReference type="FunFam" id="3.40.50.300:FF:000489">
    <property type="entry name" value="Primosome assembly protein PriA"/>
    <property type="match status" value="1"/>
</dbReference>
<dbReference type="Gene3D" id="3.40.50.300">
    <property type="entry name" value="P-loop containing nucleotide triphosphate hydrolases"/>
    <property type="match status" value="2"/>
</dbReference>
<dbReference type="Gene3D" id="3.40.1440.60">
    <property type="entry name" value="PriA, 3(prime) DNA-binding domain"/>
    <property type="match status" value="1"/>
</dbReference>
<dbReference type="HAMAP" id="MF_00983">
    <property type="entry name" value="PriA"/>
    <property type="match status" value="1"/>
</dbReference>
<dbReference type="InterPro" id="IPR011545">
    <property type="entry name" value="DEAD/DEAH_box_helicase_dom"/>
</dbReference>
<dbReference type="InterPro" id="IPR014001">
    <property type="entry name" value="Helicase_ATP-bd"/>
</dbReference>
<dbReference type="InterPro" id="IPR001650">
    <property type="entry name" value="Helicase_C-like"/>
</dbReference>
<dbReference type="InterPro" id="IPR027417">
    <property type="entry name" value="P-loop_NTPase"/>
</dbReference>
<dbReference type="InterPro" id="IPR005259">
    <property type="entry name" value="PriA"/>
</dbReference>
<dbReference type="InterPro" id="IPR042115">
    <property type="entry name" value="PriA_3primeBD_sf"/>
</dbReference>
<dbReference type="InterPro" id="IPR041236">
    <property type="entry name" value="PriA_C"/>
</dbReference>
<dbReference type="InterPro" id="IPR040498">
    <property type="entry name" value="PriA_CRR"/>
</dbReference>
<dbReference type="InterPro" id="IPR050880">
    <property type="entry name" value="PriA_helicase"/>
</dbReference>
<dbReference type="NCBIfam" id="TIGR00595">
    <property type="entry name" value="priA"/>
    <property type="match status" value="1"/>
</dbReference>
<dbReference type="NCBIfam" id="NF004069">
    <property type="entry name" value="PRK05580.2-1"/>
    <property type="match status" value="1"/>
</dbReference>
<dbReference type="PANTHER" id="PTHR30580">
    <property type="entry name" value="PRIMOSOMAL PROTEIN N"/>
    <property type="match status" value="1"/>
</dbReference>
<dbReference type="PANTHER" id="PTHR30580:SF0">
    <property type="entry name" value="PRIMOSOMAL PROTEIN N"/>
    <property type="match status" value="1"/>
</dbReference>
<dbReference type="Pfam" id="PF00270">
    <property type="entry name" value="DEAD"/>
    <property type="match status" value="1"/>
</dbReference>
<dbReference type="Pfam" id="PF00271">
    <property type="entry name" value="Helicase_C"/>
    <property type="match status" value="1"/>
</dbReference>
<dbReference type="Pfam" id="PF18074">
    <property type="entry name" value="PriA_C"/>
    <property type="match status" value="1"/>
</dbReference>
<dbReference type="Pfam" id="PF18319">
    <property type="entry name" value="Zn_ribbon_PriA"/>
    <property type="match status" value="1"/>
</dbReference>
<dbReference type="SMART" id="SM00487">
    <property type="entry name" value="DEXDc"/>
    <property type="match status" value="1"/>
</dbReference>
<dbReference type="SMART" id="SM00490">
    <property type="entry name" value="HELICc"/>
    <property type="match status" value="1"/>
</dbReference>
<dbReference type="SUPFAM" id="SSF52540">
    <property type="entry name" value="P-loop containing nucleoside triphosphate hydrolases"/>
    <property type="match status" value="1"/>
</dbReference>
<dbReference type="PROSITE" id="PS51192">
    <property type="entry name" value="HELICASE_ATP_BIND_1"/>
    <property type="match status" value="1"/>
</dbReference>
<dbReference type="PROSITE" id="PS51194">
    <property type="entry name" value="HELICASE_CTER"/>
    <property type="match status" value="1"/>
</dbReference>
<gene>
    <name evidence="1" type="primary">priA</name>
    <name type="ordered locus">jhp_0994</name>
</gene>
<sequence>MFYHLIAPLKNKTPPLTYFSKERHLKGALVNIPLRNKTLLGVVLEEVSKPSFECLELEKTPYFLLPFQIELAIFIAQYYSANLSSVLSLFAPFKECDLVGLEKIEPTLNALSQTQTNALKELQKHPASLLFGDTGSGKTEIYMHAIAQTLEQKKSALLLVPEIALTPQMQQRLKKVFKENLGLWHSKLSQNQKKQFLEKLYSQEIKLVVGTRSALFLPLKELGLIIVDEEHDFSYKSQQSPMYNARDLCLYLSHKFPIQVILGSATPSLSSYQRFKDKALVRLKGRYTPTQKNIIFEKTERFITPKLLEALKQVIDKNEQAIIFVPTRANFKTLLCPNCYKSVQCPFCSVNMSLHLKTNKLMCHYCHFSSPIPKICNACQSEVLVGKRIGTMQVLKELESLLEGAKIAILDKDHTSTPKKLHNILNDFNAQKTNILIGTQMISKGHDYAKVSLAVVLGIDNIIKSNSYRALEEGVSLLYQIAGRSARQISGQVFIQSTETDLLENFLEDYEDFLQYELQERCELYPPFSRLCLLEFKHKNEEKAQQLSLEASQTLSLCLEKGVTLSNFKAPIEKIASSYRYLILLRSKNPLSLIKSVHAFLKTAPNIPCSVNMDPVDIF</sequence>
<name>PRIA_HELPJ</name>